<sequence length="362" mass="39092">MPHNPIRVVVGPANYFSHPGSFNHLHDFFTDEQLSRAVWIYGKRAIAAAQTKLPPAFGLPGAKHILFRGHCSESDVQQLAAESGDDRSVVIGVGGGALLDTAKALARRLGLPFVAVPTIAATCAAWTPLSVWYNDAGQALHYEIFDDANFMVLVEPEIILNAPQQYLLAGIGDTLAKWYEAVVLAPQPETLPLTVRLGINNAQAIRDVLLNSSEQALSDQQNQQLTQSFCDVVDAIIAGGGMVGGLGDRFTRVAAAHAVHNGLTVLPQTEKFLHGTKVAYGILVQSALLGQDDVLAQLTGAYQRFHLPTTLAELEVDINNQAEIDKVIAHTLRPVESIHYLPVTLTPDTLRAAFKKVESFKA</sequence>
<gene>
    <name evidence="3" type="primary">hcxA</name>
    <name evidence="6" type="synonym">ybdH</name>
    <name type="ordered locus">b0599</name>
    <name type="ordered locus">JW0592</name>
</gene>
<keyword id="KW-0479">Metal-binding</keyword>
<keyword id="KW-0521">NADP</keyword>
<keyword id="KW-0560">Oxidoreductase</keyword>
<keyword id="KW-1185">Reference proteome</keyword>
<keyword id="KW-0862">Zinc</keyword>
<protein>
    <recommendedName>
        <fullName evidence="3">Hydroxycarboxylate dehydrogenase A</fullName>
        <ecNumber evidence="2">1.1.1.-</ecNumber>
    </recommendedName>
    <alternativeName>
        <fullName evidence="5">2-oxobutanoate reductase</fullName>
    </alternativeName>
    <alternativeName>
        <fullName evidence="5">2-oxoglutarate reductase</fullName>
    </alternativeName>
</protein>
<comment type="function">
    <text evidence="2">Catalyzes the NADPH-dependent reduction of 2-oxoglutarate and 2-oxobutanoate, leading to the respective 2-hydroxycarboxylate. Cannot use NADH instead of NADPH as a redox partner. Do not catalyze the reverse reactions.</text>
</comment>
<comment type="catalytic activity">
    <reaction evidence="2">
        <text>2-hydroxybutanoate + NADP(+) = 2-oxobutanoate + NADPH + H(+)</text>
        <dbReference type="Rhea" id="RHEA:52608"/>
        <dbReference type="ChEBI" id="CHEBI:15378"/>
        <dbReference type="ChEBI" id="CHEBI:16763"/>
        <dbReference type="ChEBI" id="CHEBI:57783"/>
        <dbReference type="ChEBI" id="CHEBI:58349"/>
        <dbReference type="ChEBI" id="CHEBI:64552"/>
    </reaction>
</comment>
<comment type="catalytic activity">
    <reaction evidence="2">
        <text>2-hydroxyglutarate + NADP(+) = 2-oxoglutarate + NADPH + H(+)</text>
        <dbReference type="Rhea" id="RHEA:52308"/>
        <dbReference type="ChEBI" id="CHEBI:11596"/>
        <dbReference type="ChEBI" id="CHEBI:15378"/>
        <dbReference type="ChEBI" id="CHEBI:16810"/>
        <dbReference type="ChEBI" id="CHEBI:57783"/>
        <dbReference type="ChEBI" id="CHEBI:58349"/>
    </reaction>
</comment>
<comment type="cofactor">
    <cofactor evidence="1">
        <name>Zn(2+)</name>
        <dbReference type="ChEBI" id="CHEBI:29105"/>
    </cofactor>
    <text evidence="1">Binds 1 zinc ion per subunit.</text>
</comment>
<comment type="interaction">
    <interactant intactId="EBI-553586">
        <id>P45579</id>
    </interactant>
    <interactant intactId="EBI-553586">
        <id>P45579</id>
        <label>hcxA</label>
    </interactant>
    <organismsDiffer>false</organismsDiffer>
    <experiments>3</experiments>
</comment>
<comment type="interaction">
    <interactant intactId="EBI-553586">
        <id>P45579</id>
    </interactant>
    <interactant intactId="EBI-8767954">
        <id>P0AFT8</id>
        <label>yeiW</label>
    </interactant>
    <organismsDiffer>false</organismsDiffer>
    <experiments>3</experiments>
</comment>
<comment type="disruption phenotype">
    <text evidence="2">Cells lacking this gene show a consistent change in 2-hydroxyglutarate level.</text>
</comment>
<comment type="similarity">
    <text evidence="4">Belongs to the iron-containing alcohol dehydrogenase family.</text>
</comment>
<dbReference type="EC" id="1.1.1.-" evidence="2"/>
<dbReference type="EMBL" id="U82598">
    <property type="protein sequence ID" value="AAB40800.1"/>
    <property type="molecule type" value="Genomic_DNA"/>
</dbReference>
<dbReference type="EMBL" id="U00096">
    <property type="protein sequence ID" value="AAC73700.1"/>
    <property type="molecule type" value="Genomic_DNA"/>
</dbReference>
<dbReference type="EMBL" id="AP009048">
    <property type="protein sequence ID" value="BAA35229.1"/>
    <property type="molecule type" value="Genomic_DNA"/>
</dbReference>
<dbReference type="EMBL" id="X52904">
    <property type="status" value="NOT_ANNOTATED_CDS"/>
    <property type="molecule type" value="Genomic_DNA"/>
</dbReference>
<dbReference type="PIR" id="E64793">
    <property type="entry name" value="E64793"/>
</dbReference>
<dbReference type="RefSeq" id="NP_415132.1">
    <property type="nucleotide sequence ID" value="NC_000913.3"/>
</dbReference>
<dbReference type="RefSeq" id="WP_001120441.1">
    <property type="nucleotide sequence ID" value="NZ_SSZK01000032.1"/>
</dbReference>
<dbReference type="SMR" id="P45579"/>
<dbReference type="BioGRID" id="4259892">
    <property type="interactions" value="17"/>
</dbReference>
<dbReference type="BioGRID" id="849597">
    <property type="interactions" value="7"/>
</dbReference>
<dbReference type="DIP" id="DIP-11347N"/>
<dbReference type="FunCoup" id="P45579">
    <property type="interactions" value="38"/>
</dbReference>
<dbReference type="IntAct" id="P45579">
    <property type="interactions" value="11"/>
</dbReference>
<dbReference type="STRING" id="511145.b0599"/>
<dbReference type="PaxDb" id="511145-b0599"/>
<dbReference type="EnsemblBacteria" id="AAC73700">
    <property type="protein sequence ID" value="AAC73700"/>
    <property type="gene ID" value="b0599"/>
</dbReference>
<dbReference type="GeneID" id="945212"/>
<dbReference type="KEGG" id="ecj:JW0592"/>
<dbReference type="KEGG" id="eco:b0599"/>
<dbReference type="KEGG" id="ecoc:C3026_02995"/>
<dbReference type="PATRIC" id="fig|1411691.4.peg.1669"/>
<dbReference type="EchoBASE" id="EB2555"/>
<dbReference type="eggNOG" id="COG0371">
    <property type="taxonomic scope" value="Bacteria"/>
</dbReference>
<dbReference type="HOGENOM" id="CLU_044754_2_0_6"/>
<dbReference type="InParanoid" id="P45579"/>
<dbReference type="OMA" id="HCSERDV"/>
<dbReference type="OrthoDB" id="6502012at2"/>
<dbReference type="PhylomeDB" id="P45579"/>
<dbReference type="BioCyc" id="EcoCyc:EG12692-MONOMER"/>
<dbReference type="PRO" id="PR:P45579"/>
<dbReference type="Proteomes" id="UP000000625">
    <property type="component" value="Chromosome"/>
</dbReference>
<dbReference type="GO" id="GO:0047545">
    <property type="term" value="F:2-hydroxyglutarate dehydrogenase activity"/>
    <property type="evidence" value="ECO:0000314"/>
    <property type="project" value="EcoCyc"/>
</dbReference>
<dbReference type="GO" id="GO:0042802">
    <property type="term" value="F:identical protein binding"/>
    <property type="evidence" value="ECO:0000353"/>
    <property type="project" value="IntAct"/>
</dbReference>
<dbReference type="GO" id="GO:0046872">
    <property type="term" value="F:metal ion binding"/>
    <property type="evidence" value="ECO:0007669"/>
    <property type="project" value="UniProtKB-KW"/>
</dbReference>
<dbReference type="GO" id="GO:0016616">
    <property type="term" value="F:oxidoreductase activity, acting on the CH-OH group of donors, NAD or NADP as acceptor"/>
    <property type="evidence" value="ECO:0000314"/>
    <property type="project" value="EcoCyc"/>
</dbReference>
<dbReference type="CDD" id="cd08172">
    <property type="entry name" value="GlyDH-like"/>
    <property type="match status" value="1"/>
</dbReference>
<dbReference type="FunFam" id="1.20.1090.10:FF:000011">
    <property type="entry name" value="Putative oxidoreductase"/>
    <property type="match status" value="1"/>
</dbReference>
<dbReference type="FunFam" id="3.40.50.1970:FF:000016">
    <property type="entry name" value="Putative oxidoreductase"/>
    <property type="match status" value="1"/>
</dbReference>
<dbReference type="Gene3D" id="3.40.50.1970">
    <property type="match status" value="1"/>
</dbReference>
<dbReference type="Gene3D" id="1.20.1090.10">
    <property type="entry name" value="Dehydroquinate synthase-like - alpha domain"/>
    <property type="match status" value="1"/>
</dbReference>
<dbReference type="InterPro" id="IPR001670">
    <property type="entry name" value="ADH_Fe/GldA"/>
</dbReference>
<dbReference type="InterPro" id="IPR018211">
    <property type="entry name" value="ADH_Fe_CS"/>
</dbReference>
<dbReference type="InterPro" id="IPR016205">
    <property type="entry name" value="Glycerol_DH"/>
</dbReference>
<dbReference type="NCBIfam" id="NF007880">
    <property type="entry name" value="PRK10586.1"/>
    <property type="match status" value="1"/>
</dbReference>
<dbReference type="PANTHER" id="PTHR43616">
    <property type="entry name" value="GLYCEROL DEHYDROGENASE"/>
    <property type="match status" value="1"/>
</dbReference>
<dbReference type="PANTHER" id="PTHR43616:SF3">
    <property type="entry name" value="HYDROXYCARBOXYLATE DEHYDROGENASE A"/>
    <property type="match status" value="1"/>
</dbReference>
<dbReference type="Pfam" id="PF00465">
    <property type="entry name" value="Fe-ADH"/>
    <property type="match status" value="1"/>
</dbReference>
<dbReference type="PIRSF" id="PIRSF000112">
    <property type="entry name" value="Glycerol_dehydrogenase"/>
    <property type="match status" value="1"/>
</dbReference>
<dbReference type="SUPFAM" id="SSF56796">
    <property type="entry name" value="Dehydroquinate synthase-like"/>
    <property type="match status" value="1"/>
</dbReference>
<dbReference type="PROSITE" id="PS00913">
    <property type="entry name" value="ADH_IRON_1"/>
    <property type="match status" value="1"/>
</dbReference>
<organism>
    <name type="scientific">Escherichia coli (strain K12)</name>
    <dbReference type="NCBI Taxonomy" id="83333"/>
    <lineage>
        <taxon>Bacteria</taxon>
        <taxon>Pseudomonadati</taxon>
        <taxon>Pseudomonadota</taxon>
        <taxon>Gammaproteobacteria</taxon>
        <taxon>Enterobacterales</taxon>
        <taxon>Enterobacteriaceae</taxon>
        <taxon>Escherichia</taxon>
    </lineage>
</organism>
<accession>P45579</accession>
<accession>P77632</accession>
<proteinExistence type="evidence at protein level"/>
<reference key="1">
    <citation type="journal article" date="1996" name="DNA Res.">
        <title>A 718-kb DNA sequence of the Escherichia coli K-12 genome corresponding to the 12.7-28.0 min region on the linkage map.</title>
        <authorList>
            <person name="Oshima T."/>
            <person name="Aiba H."/>
            <person name="Baba T."/>
            <person name="Fujita K."/>
            <person name="Hayashi K."/>
            <person name="Honjo A."/>
            <person name="Ikemoto K."/>
            <person name="Inada T."/>
            <person name="Itoh T."/>
            <person name="Kajihara M."/>
            <person name="Kanai K."/>
            <person name="Kashimoto K."/>
            <person name="Kimura S."/>
            <person name="Kitagawa M."/>
            <person name="Makino K."/>
            <person name="Masuda S."/>
            <person name="Miki T."/>
            <person name="Mizobuchi K."/>
            <person name="Mori H."/>
            <person name="Motomura K."/>
            <person name="Nakamura Y."/>
            <person name="Nashimoto H."/>
            <person name="Nishio Y."/>
            <person name="Saito N."/>
            <person name="Sampei G."/>
            <person name="Seki Y."/>
            <person name="Tagami H."/>
            <person name="Takemoto K."/>
            <person name="Wada C."/>
            <person name="Yamamoto Y."/>
            <person name="Yano M."/>
            <person name="Horiuchi T."/>
        </authorList>
    </citation>
    <scope>NUCLEOTIDE SEQUENCE [LARGE SCALE GENOMIC DNA]</scope>
    <source>
        <strain>K12 / W3110 / ATCC 27325 / DSM 5911</strain>
    </source>
</reference>
<reference key="2">
    <citation type="submission" date="1997-01" db="EMBL/GenBank/DDBJ databases">
        <title>Sequence of minutes 4-25 of Escherichia coli.</title>
        <authorList>
            <person name="Chung E."/>
            <person name="Allen E."/>
            <person name="Araujo R."/>
            <person name="Aparicio A.M."/>
            <person name="Davis K."/>
            <person name="Duncan M."/>
            <person name="Federspiel N."/>
            <person name="Hyman R."/>
            <person name="Kalman S."/>
            <person name="Komp C."/>
            <person name="Kurdi O."/>
            <person name="Lew H."/>
            <person name="Lin D."/>
            <person name="Namath A."/>
            <person name="Oefner P."/>
            <person name="Roberts D."/>
            <person name="Schramm S."/>
            <person name="Davis R.W."/>
        </authorList>
    </citation>
    <scope>NUCLEOTIDE SEQUENCE [LARGE SCALE GENOMIC DNA]</scope>
    <source>
        <strain>K12 / MG1655 / ATCC 47076</strain>
    </source>
</reference>
<reference key="3">
    <citation type="journal article" date="1997" name="Science">
        <title>The complete genome sequence of Escherichia coli K-12.</title>
        <authorList>
            <person name="Blattner F.R."/>
            <person name="Plunkett G. III"/>
            <person name="Bloch C.A."/>
            <person name="Perna N.T."/>
            <person name="Burland V."/>
            <person name="Riley M."/>
            <person name="Collado-Vides J."/>
            <person name="Glasner J.D."/>
            <person name="Rode C.K."/>
            <person name="Mayhew G.F."/>
            <person name="Gregor J."/>
            <person name="Davis N.W."/>
            <person name="Kirkpatrick H.A."/>
            <person name="Goeden M.A."/>
            <person name="Rose D.J."/>
            <person name="Mau B."/>
            <person name="Shao Y."/>
        </authorList>
    </citation>
    <scope>NUCLEOTIDE SEQUENCE [LARGE SCALE GENOMIC DNA]</scope>
    <source>
        <strain>K12 / MG1655 / ATCC 47076</strain>
    </source>
</reference>
<reference key="4">
    <citation type="journal article" date="2006" name="Mol. Syst. Biol.">
        <title>Highly accurate genome sequences of Escherichia coli K-12 strains MG1655 and W3110.</title>
        <authorList>
            <person name="Hayashi K."/>
            <person name="Morooka N."/>
            <person name="Yamamoto Y."/>
            <person name="Fujita K."/>
            <person name="Isono K."/>
            <person name="Choi S."/>
            <person name="Ohtsubo E."/>
            <person name="Baba T."/>
            <person name="Wanner B.L."/>
            <person name="Mori H."/>
            <person name="Horiuchi T."/>
        </authorList>
    </citation>
    <scope>NUCLEOTIDE SEQUENCE [LARGE SCALE GENOMIC DNA]</scope>
    <source>
        <strain>K12 / W3110 / ATCC 27325 / DSM 5911</strain>
    </source>
</reference>
<reference key="5">
    <citation type="journal article" date="1991" name="J. Mol. Biol.">
        <title>Molecular and functional characterization of a carbon starvation gene of Escherichia coli.</title>
        <authorList>
            <person name="Schultz J.E."/>
            <person name="Matin A."/>
        </authorList>
    </citation>
    <scope>NUCLEOTIDE SEQUENCE [GENOMIC DNA] OF 282-362</scope>
    <source>
        <strain>K12</strain>
    </source>
</reference>
<reference key="6">
    <citation type="journal article" date="1995" name="Nucleic Acids Res.">
        <title>Detection of new genes in a bacterial genome using Markov models for three gene classes.</title>
        <authorList>
            <person name="Borodovsky M."/>
            <person name="McIninch J."/>
            <person name="Koonin E.V."/>
            <person name="Rudd K.E."/>
            <person name="Medigue C."/>
            <person name="Danchin A."/>
        </authorList>
    </citation>
    <scope>IDENTIFICATION</scope>
</reference>
<reference key="7">
    <citation type="journal article" date="2017" name="Nat. Methods">
        <title>Nontargeted in vitro metabolomics for high-throughput identification of novel enzymes in Escherichia coli.</title>
        <authorList>
            <person name="Sevin D.C."/>
            <person name="Fuhrer T."/>
            <person name="Zamboni N."/>
            <person name="Sauer U."/>
        </authorList>
    </citation>
    <scope>FUNCTION</scope>
    <scope>CATALYTIC ACTIVITY</scope>
    <scope>DISRUPTION PHENOTYPE</scope>
    <source>
        <strain>K12</strain>
    </source>
</reference>
<name>HCXA_ECOLI</name>
<evidence type="ECO:0000250" key="1">
    <source>
        <dbReference type="UniProtKB" id="O13702"/>
    </source>
</evidence>
<evidence type="ECO:0000269" key="2">
    <source>
    </source>
</evidence>
<evidence type="ECO:0000303" key="3">
    <source>
    </source>
</evidence>
<evidence type="ECO:0000305" key="4"/>
<evidence type="ECO:0000305" key="5">
    <source>
    </source>
</evidence>
<evidence type="ECO:0000312" key="6">
    <source>
        <dbReference type="EMBL" id="AAC73700.1"/>
    </source>
</evidence>
<feature type="chain" id="PRO_0000087831" description="Hydroxycarboxylate dehydrogenase A">
    <location>
        <begin position="1"/>
        <end position="362"/>
    </location>
</feature>
<feature type="binding site" evidence="1">
    <location>
        <position position="173"/>
    </location>
    <ligand>
        <name>Zn(2+)</name>
        <dbReference type="ChEBI" id="CHEBI:29105"/>
        <note>catalytic</note>
    </ligand>
</feature>
<feature type="binding site" evidence="1">
    <location>
        <position position="257"/>
    </location>
    <ligand>
        <name>Zn(2+)</name>
        <dbReference type="ChEBI" id="CHEBI:29105"/>
        <note>catalytic</note>
    </ligand>
</feature>
<feature type="binding site" evidence="1">
    <location>
        <position position="274"/>
    </location>
    <ligand>
        <name>Zn(2+)</name>
        <dbReference type="ChEBI" id="CHEBI:29105"/>
        <note>catalytic</note>
    </ligand>
</feature>